<accession>Q4KBI1</accession>
<evidence type="ECO:0000255" key="1">
    <source>
        <dbReference type="HAMAP-Rule" id="MF_00042"/>
    </source>
</evidence>
<evidence type="ECO:0000255" key="2">
    <source>
        <dbReference type="PROSITE-ProRule" id="PRU00408"/>
    </source>
</evidence>
<comment type="function">
    <text evidence="1">Endonuclease that specifically degrades the RNA of RNA-DNA hybrids.</text>
</comment>
<comment type="catalytic activity">
    <reaction evidence="1">
        <text>Endonucleolytic cleavage to 5'-phosphomonoester.</text>
        <dbReference type="EC" id="3.1.26.4"/>
    </reaction>
</comment>
<comment type="cofactor">
    <cofactor evidence="1">
        <name>Mg(2+)</name>
        <dbReference type="ChEBI" id="CHEBI:18420"/>
    </cofactor>
    <text evidence="1">Binds 1 Mg(2+) ion per subunit. May bind a second metal ion at a regulatory site, or after substrate binding.</text>
</comment>
<comment type="subunit">
    <text evidence="1">Monomer.</text>
</comment>
<comment type="subcellular location">
    <subcellularLocation>
        <location evidence="1">Cytoplasm</location>
    </subcellularLocation>
</comment>
<comment type="similarity">
    <text evidence="1">Belongs to the RNase H family.</text>
</comment>
<gene>
    <name evidence="1" type="primary">rnhA</name>
    <name type="ordered locus">PFL_3297</name>
</gene>
<name>RNH_PSEF5</name>
<dbReference type="EC" id="3.1.26.4" evidence="1"/>
<dbReference type="EMBL" id="CP000076">
    <property type="protein sequence ID" value="AAY92566.1"/>
    <property type="molecule type" value="Genomic_DNA"/>
</dbReference>
<dbReference type="RefSeq" id="WP_011061579.1">
    <property type="nucleotide sequence ID" value="NC_004129.6"/>
</dbReference>
<dbReference type="SMR" id="Q4KBI1"/>
<dbReference type="STRING" id="220664.PFL_3297"/>
<dbReference type="GeneID" id="57476314"/>
<dbReference type="KEGG" id="pfl:PFL_3297"/>
<dbReference type="PATRIC" id="fig|220664.5.peg.3365"/>
<dbReference type="eggNOG" id="COG0328">
    <property type="taxonomic scope" value="Bacteria"/>
</dbReference>
<dbReference type="HOGENOM" id="CLU_030894_6_0_6"/>
<dbReference type="Proteomes" id="UP000008540">
    <property type="component" value="Chromosome"/>
</dbReference>
<dbReference type="GO" id="GO:0005737">
    <property type="term" value="C:cytoplasm"/>
    <property type="evidence" value="ECO:0007669"/>
    <property type="project" value="UniProtKB-SubCell"/>
</dbReference>
<dbReference type="GO" id="GO:0000287">
    <property type="term" value="F:magnesium ion binding"/>
    <property type="evidence" value="ECO:0007669"/>
    <property type="project" value="UniProtKB-UniRule"/>
</dbReference>
<dbReference type="GO" id="GO:0003676">
    <property type="term" value="F:nucleic acid binding"/>
    <property type="evidence" value="ECO:0007669"/>
    <property type="project" value="InterPro"/>
</dbReference>
<dbReference type="GO" id="GO:0004523">
    <property type="term" value="F:RNA-DNA hybrid ribonuclease activity"/>
    <property type="evidence" value="ECO:0007669"/>
    <property type="project" value="UniProtKB-UniRule"/>
</dbReference>
<dbReference type="GO" id="GO:0043137">
    <property type="term" value="P:DNA replication, removal of RNA primer"/>
    <property type="evidence" value="ECO:0007669"/>
    <property type="project" value="TreeGrafter"/>
</dbReference>
<dbReference type="CDD" id="cd09278">
    <property type="entry name" value="RNase_HI_prokaryote_like"/>
    <property type="match status" value="1"/>
</dbReference>
<dbReference type="FunFam" id="3.30.420.10:FF:000089">
    <property type="entry name" value="Ribonuclease H"/>
    <property type="match status" value="1"/>
</dbReference>
<dbReference type="Gene3D" id="3.30.420.10">
    <property type="entry name" value="Ribonuclease H-like superfamily/Ribonuclease H"/>
    <property type="match status" value="1"/>
</dbReference>
<dbReference type="HAMAP" id="MF_00042">
    <property type="entry name" value="RNase_H"/>
    <property type="match status" value="1"/>
</dbReference>
<dbReference type="InterPro" id="IPR050092">
    <property type="entry name" value="RNase_H"/>
</dbReference>
<dbReference type="InterPro" id="IPR012337">
    <property type="entry name" value="RNaseH-like_sf"/>
</dbReference>
<dbReference type="InterPro" id="IPR002156">
    <property type="entry name" value="RNaseH_domain"/>
</dbReference>
<dbReference type="InterPro" id="IPR036397">
    <property type="entry name" value="RNaseH_sf"/>
</dbReference>
<dbReference type="InterPro" id="IPR022892">
    <property type="entry name" value="RNaseHI"/>
</dbReference>
<dbReference type="NCBIfam" id="NF001236">
    <property type="entry name" value="PRK00203.1"/>
    <property type="match status" value="1"/>
</dbReference>
<dbReference type="PANTHER" id="PTHR10642">
    <property type="entry name" value="RIBONUCLEASE H1"/>
    <property type="match status" value="1"/>
</dbReference>
<dbReference type="PANTHER" id="PTHR10642:SF26">
    <property type="entry name" value="RIBONUCLEASE H1"/>
    <property type="match status" value="1"/>
</dbReference>
<dbReference type="Pfam" id="PF00075">
    <property type="entry name" value="RNase_H"/>
    <property type="match status" value="1"/>
</dbReference>
<dbReference type="SUPFAM" id="SSF53098">
    <property type="entry name" value="Ribonuclease H-like"/>
    <property type="match status" value="1"/>
</dbReference>
<dbReference type="PROSITE" id="PS50879">
    <property type="entry name" value="RNASE_H_1"/>
    <property type="match status" value="1"/>
</dbReference>
<keyword id="KW-0963">Cytoplasm</keyword>
<keyword id="KW-0255">Endonuclease</keyword>
<keyword id="KW-0378">Hydrolase</keyword>
<keyword id="KW-0460">Magnesium</keyword>
<keyword id="KW-0479">Metal-binding</keyword>
<keyword id="KW-0540">Nuclease</keyword>
<protein>
    <recommendedName>
        <fullName evidence="1">Ribonuclease H</fullName>
        <shortName evidence="1">RNase H</shortName>
        <ecNumber evidence="1">3.1.26.4</ecNumber>
    </recommendedName>
</protein>
<proteinExistence type="inferred from homology"/>
<feature type="chain" id="PRO_1000074655" description="Ribonuclease H">
    <location>
        <begin position="1"/>
        <end position="150"/>
    </location>
</feature>
<feature type="domain" description="RNase H type-1" evidence="2">
    <location>
        <begin position="1"/>
        <end position="142"/>
    </location>
</feature>
<feature type="binding site" evidence="1">
    <location>
        <position position="10"/>
    </location>
    <ligand>
        <name>Mg(2+)</name>
        <dbReference type="ChEBI" id="CHEBI:18420"/>
        <label>1</label>
    </ligand>
</feature>
<feature type="binding site" evidence="1">
    <location>
        <position position="10"/>
    </location>
    <ligand>
        <name>Mg(2+)</name>
        <dbReference type="ChEBI" id="CHEBI:18420"/>
        <label>2</label>
    </ligand>
</feature>
<feature type="binding site" evidence="1">
    <location>
        <position position="48"/>
    </location>
    <ligand>
        <name>Mg(2+)</name>
        <dbReference type="ChEBI" id="CHEBI:18420"/>
        <label>1</label>
    </ligand>
</feature>
<feature type="binding site" evidence="1">
    <location>
        <position position="70"/>
    </location>
    <ligand>
        <name>Mg(2+)</name>
        <dbReference type="ChEBI" id="CHEBI:18420"/>
        <label>1</label>
    </ligand>
</feature>
<feature type="binding site" evidence="1">
    <location>
        <position position="134"/>
    </location>
    <ligand>
        <name>Mg(2+)</name>
        <dbReference type="ChEBI" id="CHEBI:18420"/>
        <label>2</label>
    </ligand>
</feature>
<sequence>MSDSVEIFTDGACKGNPGPGGWGALLVCKGVEKELWGGEANTTNNRMELMAAIRGLEELKRQCDVQLVTDSQYVMKGINEWMANWKKRGWKTAAKEPVKNADLWQQLDEQVNRHNVTWKWVRGHTGHHGNERADQLANRGVDEVRGYKQP</sequence>
<organism>
    <name type="scientific">Pseudomonas fluorescens (strain ATCC BAA-477 / NRRL B-23932 / Pf-5)</name>
    <dbReference type="NCBI Taxonomy" id="220664"/>
    <lineage>
        <taxon>Bacteria</taxon>
        <taxon>Pseudomonadati</taxon>
        <taxon>Pseudomonadota</taxon>
        <taxon>Gammaproteobacteria</taxon>
        <taxon>Pseudomonadales</taxon>
        <taxon>Pseudomonadaceae</taxon>
        <taxon>Pseudomonas</taxon>
    </lineage>
</organism>
<reference key="1">
    <citation type="journal article" date="2005" name="Nat. Biotechnol.">
        <title>Complete genome sequence of the plant commensal Pseudomonas fluorescens Pf-5.</title>
        <authorList>
            <person name="Paulsen I.T."/>
            <person name="Press C.M."/>
            <person name="Ravel J."/>
            <person name="Kobayashi D.Y."/>
            <person name="Myers G.S.A."/>
            <person name="Mavrodi D.V."/>
            <person name="DeBoy R.T."/>
            <person name="Seshadri R."/>
            <person name="Ren Q."/>
            <person name="Madupu R."/>
            <person name="Dodson R.J."/>
            <person name="Durkin A.S."/>
            <person name="Brinkac L.M."/>
            <person name="Daugherty S.C."/>
            <person name="Sullivan S.A."/>
            <person name="Rosovitz M.J."/>
            <person name="Gwinn M.L."/>
            <person name="Zhou L."/>
            <person name="Schneider D.J."/>
            <person name="Cartinhour S.W."/>
            <person name="Nelson W.C."/>
            <person name="Weidman J."/>
            <person name="Watkins K."/>
            <person name="Tran K."/>
            <person name="Khouri H."/>
            <person name="Pierson E.A."/>
            <person name="Pierson L.S. III"/>
            <person name="Thomashow L.S."/>
            <person name="Loper J.E."/>
        </authorList>
    </citation>
    <scope>NUCLEOTIDE SEQUENCE [LARGE SCALE GENOMIC DNA]</scope>
    <source>
        <strain>ATCC BAA-477 / NRRL B-23932 / Pf-5</strain>
    </source>
</reference>